<organism>
    <name type="scientific">Picrophilus torridus (strain ATCC 700027 / DSM 9790 / JCM 10055 / NBRC 100828 / KAW 2/3)</name>
    <dbReference type="NCBI Taxonomy" id="1122961"/>
    <lineage>
        <taxon>Archaea</taxon>
        <taxon>Methanobacteriati</taxon>
        <taxon>Thermoplasmatota</taxon>
        <taxon>Thermoplasmata</taxon>
        <taxon>Thermoplasmatales</taxon>
        <taxon>Picrophilaceae</taxon>
        <taxon>Picrophilus</taxon>
    </lineage>
</organism>
<sequence length="97" mass="10573">MTKMSKGPRSGSRRVMTKSVKNKGMPKVNEMMKTFEVGDRAAIVINSAVPDGMPHHDFQGITGVITGMQGSCYILSFKVGNVEKKVIAAPVHLRKVQ</sequence>
<gene>
    <name evidence="1" type="primary">rpl21e</name>
    <name type="ordered locus">PTO0389</name>
</gene>
<name>RL21_PICTO</name>
<protein>
    <recommendedName>
        <fullName evidence="1">Large ribosomal subunit protein eL21</fullName>
    </recommendedName>
    <alternativeName>
        <fullName evidence="3">50S ribosomal protein L21e</fullName>
    </alternativeName>
</protein>
<accession>Q6L228</accession>
<dbReference type="EMBL" id="AE017261">
    <property type="protein sequence ID" value="AAT42974.1"/>
    <property type="molecule type" value="Genomic_DNA"/>
</dbReference>
<dbReference type="RefSeq" id="WP_011177190.1">
    <property type="nucleotide sequence ID" value="NC_005877.1"/>
</dbReference>
<dbReference type="SMR" id="Q6L228"/>
<dbReference type="FunCoup" id="Q6L228">
    <property type="interactions" value="172"/>
</dbReference>
<dbReference type="STRING" id="263820.PTO0389"/>
<dbReference type="PaxDb" id="263820-PTO0389"/>
<dbReference type="GeneID" id="2844769"/>
<dbReference type="KEGG" id="pto:PTO0389"/>
<dbReference type="eggNOG" id="arCOG04129">
    <property type="taxonomic scope" value="Archaea"/>
</dbReference>
<dbReference type="HOGENOM" id="CLU_103610_1_1_2"/>
<dbReference type="InParanoid" id="Q6L228"/>
<dbReference type="OrthoDB" id="6295at2157"/>
<dbReference type="Proteomes" id="UP000000438">
    <property type="component" value="Chromosome"/>
</dbReference>
<dbReference type="GO" id="GO:1990904">
    <property type="term" value="C:ribonucleoprotein complex"/>
    <property type="evidence" value="ECO:0007669"/>
    <property type="project" value="UniProtKB-KW"/>
</dbReference>
<dbReference type="GO" id="GO:0005840">
    <property type="term" value="C:ribosome"/>
    <property type="evidence" value="ECO:0007669"/>
    <property type="project" value="UniProtKB-KW"/>
</dbReference>
<dbReference type="GO" id="GO:0003735">
    <property type="term" value="F:structural constituent of ribosome"/>
    <property type="evidence" value="ECO:0007669"/>
    <property type="project" value="InterPro"/>
</dbReference>
<dbReference type="GO" id="GO:0006412">
    <property type="term" value="P:translation"/>
    <property type="evidence" value="ECO:0007669"/>
    <property type="project" value="UniProtKB-UniRule"/>
</dbReference>
<dbReference type="Gene3D" id="2.30.30.70">
    <property type="entry name" value="Ribosomal protein L21"/>
    <property type="match status" value="1"/>
</dbReference>
<dbReference type="HAMAP" id="MF_00369">
    <property type="entry name" value="Ribosomal_eL21"/>
    <property type="match status" value="1"/>
</dbReference>
<dbReference type="InterPro" id="IPR001147">
    <property type="entry name" value="Ribosomal_eL21"/>
</dbReference>
<dbReference type="InterPro" id="IPR022856">
    <property type="entry name" value="Ribosomal_eL21_arc"/>
</dbReference>
<dbReference type="InterPro" id="IPR036948">
    <property type="entry name" value="Ribosomal_eL21_sf"/>
</dbReference>
<dbReference type="InterPro" id="IPR008991">
    <property type="entry name" value="Translation_prot_SH3-like_sf"/>
</dbReference>
<dbReference type="NCBIfam" id="NF003303">
    <property type="entry name" value="PRK04306.1"/>
    <property type="match status" value="1"/>
</dbReference>
<dbReference type="Pfam" id="PF01157">
    <property type="entry name" value="Ribosomal_L21e"/>
    <property type="match status" value="1"/>
</dbReference>
<dbReference type="SUPFAM" id="SSF50104">
    <property type="entry name" value="Translation proteins SH3-like domain"/>
    <property type="match status" value="1"/>
</dbReference>
<reference key="1">
    <citation type="journal article" date="2004" name="Proc. Natl. Acad. Sci. U.S.A.">
        <title>Genome sequence of Picrophilus torridus and its implications for life around pH 0.</title>
        <authorList>
            <person name="Fuetterer O."/>
            <person name="Angelov A."/>
            <person name="Liesegang H."/>
            <person name="Gottschalk G."/>
            <person name="Schleper C."/>
            <person name="Schepers B."/>
            <person name="Dock C."/>
            <person name="Antranikian G."/>
            <person name="Liebl W."/>
        </authorList>
    </citation>
    <scope>NUCLEOTIDE SEQUENCE [LARGE SCALE GENOMIC DNA]</scope>
    <source>
        <strain>ATCC 700027 / DSM 9790 / JCM 10055 / NBRC 100828 / KAW 2/3</strain>
    </source>
</reference>
<keyword id="KW-0687">Ribonucleoprotein</keyword>
<keyword id="KW-0689">Ribosomal protein</keyword>
<feature type="chain" id="PRO_0000149695" description="Large ribosomal subunit protein eL21">
    <location>
        <begin position="1"/>
        <end position="97"/>
    </location>
</feature>
<feature type="region of interest" description="Disordered" evidence="2">
    <location>
        <begin position="1"/>
        <end position="23"/>
    </location>
</feature>
<proteinExistence type="inferred from homology"/>
<evidence type="ECO:0000255" key="1">
    <source>
        <dbReference type="HAMAP-Rule" id="MF_00369"/>
    </source>
</evidence>
<evidence type="ECO:0000256" key="2">
    <source>
        <dbReference type="SAM" id="MobiDB-lite"/>
    </source>
</evidence>
<evidence type="ECO:0000305" key="3"/>
<comment type="similarity">
    <text evidence="1">Belongs to the eukaryotic ribosomal protein eL21 family.</text>
</comment>